<organism>
    <name type="scientific">Geobacillus kaustophilus (strain HTA426)</name>
    <dbReference type="NCBI Taxonomy" id="235909"/>
    <lineage>
        <taxon>Bacteria</taxon>
        <taxon>Bacillati</taxon>
        <taxon>Bacillota</taxon>
        <taxon>Bacilli</taxon>
        <taxon>Bacillales</taxon>
        <taxon>Anoxybacillaceae</taxon>
        <taxon>Geobacillus</taxon>
        <taxon>Geobacillus thermoleovorans group</taxon>
    </lineage>
</organism>
<comment type="function">
    <text evidence="1">DEAD-box RNA helicase possibly involved in RNA degradation. Unwinds dsRNA in both 5'- and 3'-directions, has RNA-dependent ATPase activity.</text>
</comment>
<comment type="catalytic activity">
    <reaction evidence="1">
        <text>ATP + H2O = ADP + phosphate + H(+)</text>
        <dbReference type="Rhea" id="RHEA:13065"/>
        <dbReference type="ChEBI" id="CHEBI:15377"/>
        <dbReference type="ChEBI" id="CHEBI:15378"/>
        <dbReference type="ChEBI" id="CHEBI:30616"/>
        <dbReference type="ChEBI" id="CHEBI:43474"/>
        <dbReference type="ChEBI" id="CHEBI:456216"/>
        <dbReference type="EC" id="3.6.4.13"/>
    </reaction>
</comment>
<comment type="subunit">
    <text evidence="1">Oligomerizes, may be a member of the RNA degradosome.</text>
</comment>
<comment type="subcellular location">
    <subcellularLocation>
        <location evidence="1">Cytoplasm</location>
    </subcellularLocation>
</comment>
<comment type="similarity">
    <text evidence="1">Belongs to the DEAD box helicase family. CshA subfamily.</text>
</comment>
<proteinExistence type="inferred from homology"/>
<keyword id="KW-0067">ATP-binding</keyword>
<keyword id="KW-0963">Cytoplasm</keyword>
<keyword id="KW-0347">Helicase</keyword>
<keyword id="KW-0378">Hydrolase</keyword>
<keyword id="KW-0547">Nucleotide-binding</keyword>
<keyword id="KW-1185">Reference proteome</keyword>
<keyword id="KW-0694">RNA-binding</keyword>
<keyword id="KW-0346">Stress response</keyword>
<reference key="1">
    <citation type="journal article" date="2004" name="Nucleic Acids Res.">
        <title>Thermoadaptation trait revealed by the genome sequence of thermophilic Geobacillus kaustophilus.</title>
        <authorList>
            <person name="Takami H."/>
            <person name="Takaki Y."/>
            <person name="Chee G.-J."/>
            <person name="Nishi S."/>
            <person name="Shimamura S."/>
            <person name="Suzuki H."/>
            <person name="Matsui S."/>
            <person name="Uchiyama I."/>
        </authorList>
    </citation>
    <scope>NUCLEOTIDE SEQUENCE [LARGE SCALE GENOMIC DNA]</scope>
    <source>
        <strain>HTA426</strain>
    </source>
</reference>
<name>CSHA_GEOKA</name>
<accession>Q5L3G9</accession>
<feature type="chain" id="PRO_0000280057" description="DEAD-box ATP-dependent RNA helicase CshA">
    <location>
        <begin position="1"/>
        <end position="467"/>
    </location>
</feature>
<feature type="domain" description="Helicase ATP-binding" evidence="1">
    <location>
        <begin position="33"/>
        <end position="203"/>
    </location>
</feature>
<feature type="domain" description="Helicase C-terminal" evidence="1">
    <location>
        <begin position="214"/>
        <end position="374"/>
    </location>
</feature>
<feature type="region of interest" description="Disordered" evidence="2">
    <location>
        <begin position="428"/>
        <end position="467"/>
    </location>
</feature>
<feature type="short sequence motif" description="Q motif">
    <location>
        <begin position="2"/>
        <end position="30"/>
    </location>
</feature>
<feature type="short sequence motif" description="DEAD box">
    <location>
        <begin position="151"/>
        <end position="154"/>
    </location>
</feature>
<feature type="compositionally biased region" description="Basic residues" evidence="2">
    <location>
        <begin position="457"/>
        <end position="467"/>
    </location>
</feature>
<feature type="binding site" evidence="1">
    <location>
        <begin position="46"/>
        <end position="53"/>
    </location>
    <ligand>
        <name>ATP</name>
        <dbReference type="ChEBI" id="CHEBI:30616"/>
    </ligand>
</feature>
<gene>
    <name evidence="1" type="primary">cshA</name>
    <name type="ordered locus">GK0226</name>
</gene>
<evidence type="ECO:0000255" key="1">
    <source>
        <dbReference type="HAMAP-Rule" id="MF_01493"/>
    </source>
</evidence>
<evidence type="ECO:0000256" key="2">
    <source>
        <dbReference type="SAM" id="MobiDB-lite"/>
    </source>
</evidence>
<protein>
    <recommendedName>
        <fullName evidence="1">DEAD-box ATP-dependent RNA helicase CshA</fullName>
        <ecNumber evidence="1">3.6.4.13</ecNumber>
    </recommendedName>
</protein>
<sequence>MTTFQELGLSQEVMKAIERMGFEETTPIQAKTIPLSLQNKDVIGQAQTGTGKTAAFGIPIVEKVNVKNSAVQALVVAPTRELAIQVSEELYKIGAVKRVRVLPIYGGQDIERQIRALKKHPHVIVGTPGRIIDHINRGTLRLEHVHTVVLDEADEMLNMGFIEDIEAILSHVPAERQTLLFSATMPDPIRRIAERFMNEPELVKVKAKEMTVPNIQQYYLEVHEKKKFDILTRLLDIQAPELAIVFGRTKRRVDELAEALNLRGYAAEGIHGDLSQAKRLSVLRKFKEGAIEILVATDVAARGLDISGVTHVYNFDIPQDPESYVHRIGRTGRAGKTGVAMTFVTPREIGQLHHIERTTKRKMERMKPPTLDEALEGQQRIAIEKLLNVVETENLSFYKRAAEELLEEHDSVTIVAACLKMLTREPDTTPVQLTEEPPLAVKREKKRGGRPDGSARSRTKKRRITAH</sequence>
<dbReference type="EC" id="3.6.4.13" evidence="1"/>
<dbReference type="EMBL" id="BA000043">
    <property type="protein sequence ID" value="BAD74511.1"/>
    <property type="molecule type" value="Genomic_DNA"/>
</dbReference>
<dbReference type="SMR" id="Q5L3G9"/>
<dbReference type="STRING" id="235909.GK0226"/>
<dbReference type="KEGG" id="gka:GK0226"/>
<dbReference type="eggNOG" id="COG0513">
    <property type="taxonomic scope" value="Bacteria"/>
</dbReference>
<dbReference type="HOGENOM" id="CLU_003041_21_0_9"/>
<dbReference type="Proteomes" id="UP000001172">
    <property type="component" value="Chromosome"/>
</dbReference>
<dbReference type="GO" id="GO:0043590">
    <property type="term" value="C:bacterial nucleoid"/>
    <property type="evidence" value="ECO:0000250"/>
    <property type="project" value="UniProtKB"/>
</dbReference>
<dbReference type="GO" id="GO:0005829">
    <property type="term" value="C:cytosol"/>
    <property type="evidence" value="ECO:0007669"/>
    <property type="project" value="TreeGrafter"/>
</dbReference>
<dbReference type="GO" id="GO:0005840">
    <property type="term" value="C:ribosome"/>
    <property type="evidence" value="ECO:0007669"/>
    <property type="project" value="TreeGrafter"/>
</dbReference>
<dbReference type="GO" id="GO:0005524">
    <property type="term" value="F:ATP binding"/>
    <property type="evidence" value="ECO:0000250"/>
    <property type="project" value="UniProtKB"/>
</dbReference>
<dbReference type="GO" id="GO:0016887">
    <property type="term" value="F:ATP hydrolysis activity"/>
    <property type="evidence" value="ECO:0007669"/>
    <property type="project" value="RHEA"/>
</dbReference>
<dbReference type="GO" id="GO:0003723">
    <property type="term" value="F:RNA binding"/>
    <property type="evidence" value="ECO:0000250"/>
    <property type="project" value="UniProtKB"/>
</dbReference>
<dbReference type="GO" id="GO:0003724">
    <property type="term" value="F:RNA helicase activity"/>
    <property type="evidence" value="ECO:0000250"/>
    <property type="project" value="UniProtKB"/>
</dbReference>
<dbReference type="GO" id="GO:0033592">
    <property type="term" value="F:RNA strand annealing activity"/>
    <property type="evidence" value="ECO:0007669"/>
    <property type="project" value="TreeGrafter"/>
</dbReference>
<dbReference type="GO" id="GO:0009409">
    <property type="term" value="P:response to cold"/>
    <property type="evidence" value="ECO:0007669"/>
    <property type="project" value="TreeGrafter"/>
</dbReference>
<dbReference type="GO" id="GO:0006401">
    <property type="term" value="P:RNA catabolic process"/>
    <property type="evidence" value="ECO:0007669"/>
    <property type="project" value="UniProtKB-UniRule"/>
</dbReference>
<dbReference type="CDD" id="cd00268">
    <property type="entry name" value="DEADc"/>
    <property type="match status" value="1"/>
</dbReference>
<dbReference type="CDD" id="cd18787">
    <property type="entry name" value="SF2_C_DEAD"/>
    <property type="match status" value="1"/>
</dbReference>
<dbReference type="FunFam" id="3.40.50.300:FF:000108">
    <property type="entry name" value="ATP-dependent RNA helicase RhlE"/>
    <property type="match status" value="1"/>
</dbReference>
<dbReference type="FunFam" id="3.40.50.300:FF:000783">
    <property type="entry name" value="DEAD-box ATP-dependent RNA helicase CshA"/>
    <property type="match status" value="1"/>
</dbReference>
<dbReference type="Gene3D" id="3.40.50.300">
    <property type="entry name" value="P-loop containing nucleotide triphosphate hydrolases"/>
    <property type="match status" value="2"/>
</dbReference>
<dbReference type="HAMAP" id="MF_01493">
    <property type="entry name" value="DEAD_helicase_CshA"/>
    <property type="match status" value="1"/>
</dbReference>
<dbReference type="InterPro" id="IPR011545">
    <property type="entry name" value="DEAD/DEAH_box_helicase_dom"/>
</dbReference>
<dbReference type="InterPro" id="IPR050547">
    <property type="entry name" value="DEAD_box_RNA_helicases"/>
</dbReference>
<dbReference type="InterPro" id="IPR030880">
    <property type="entry name" value="DEAD_helicase_CshA"/>
</dbReference>
<dbReference type="InterPro" id="IPR014001">
    <property type="entry name" value="Helicase_ATP-bd"/>
</dbReference>
<dbReference type="InterPro" id="IPR001650">
    <property type="entry name" value="Helicase_C-like"/>
</dbReference>
<dbReference type="InterPro" id="IPR027417">
    <property type="entry name" value="P-loop_NTPase"/>
</dbReference>
<dbReference type="InterPro" id="IPR000629">
    <property type="entry name" value="RNA-helicase_DEAD-box_CS"/>
</dbReference>
<dbReference type="InterPro" id="IPR014014">
    <property type="entry name" value="RNA_helicase_DEAD_Q_motif"/>
</dbReference>
<dbReference type="PANTHER" id="PTHR47963">
    <property type="entry name" value="DEAD-BOX ATP-DEPENDENT RNA HELICASE 47, MITOCHONDRIAL"/>
    <property type="match status" value="1"/>
</dbReference>
<dbReference type="PANTHER" id="PTHR47963:SF5">
    <property type="entry name" value="DEAD-BOX ATP-DEPENDENT RNA HELICASE CSHA"/>
    <property type="match status" value="1"/>
</dbReference>
<dbReference type="Pfam" id="PF00270">
    <property type="entry name" value="DEAD"/>
    <property type="match status" value="1"/>
</dbReference>
<dbReference type="Pfam" id="PF00271">
    <property type="entry name" value="Helicase_C"/>
    <property type="match status" value="1"/>
</dbReference>
<dbReference type="SMART" id="SM00487">
    <property type="entry name" value="DEXDc"/>
    <property type="match status" value="1"/>
</dbReference>
<dbReference type="SMART" id="SM00490">
    <property type="entry name" value="HELICc"/>
    <property type="match status" value="1"/>
</dbReference>
<dbReference type="SUPFAM" id="SSF52540">
    <property type="entry name" value="P-loop containing nucleoside triphosphate hydrolases"/>
    <property type="match status" value="1"/>
</dbReference>
<dbReference type="PROSITE" id="PS00039">
    <property type="entry name" value="DEAD_ATP_HELICASE"/>
    <property type="match status" value="1"/>
</dbReference>
<dbReference type="PROSITE" id="PS51192">
    <property type="entry name" value="HELICASE_ATP_BIND_1"/>
    <property type="match status" value="1"/>
</dbReference>
<dbReference type="PROSITE" id="PS51194">
    <property type="entry name" value="HELICASE_CTER"/>
    <property type="match status" value="1"/>
</dbReference>
<dbReference type="PROSITE" id="PS51195">
    <property type="entry name" value="Q_MOTIF"/>
    <property type="match status" value="1"/>
</dbReference>